<organism>
    <name type="scientific">Brucella abortus biovar 1 (strain 9-941)</name>
    <dbReference type="NCBI Taxonomy" id="262698"/>
    <lineage>
        <taxon>Bacteria</taxon>
        <taxon>Pseudomonadati</taxon>
        <taxon>Pseudomonadota</taxon>
        <taxon>Alphaproteobacteria</taxon>
        <taxon>Hyphomicrobiales</taxon>
        <taxon>Brucellaceae</taxon>
        <taxon>Brucella/Ochrobactrum group</taxon>
        <taxon>Brucella</taxon>
    </lineage>
</organism>
<name>TRPA_BRUAB</name>
<reference key="1">
    <citation type="journal article" date="2005" name="J. Bacteriol.">
        <title>Completion of the genome sequence of Brucella abortus and comparison to the highly similar genomes of Brucella melitensis and Brucella suis.</title>
        <authorList>
            <person name="Halling S.M."/>
            <person name="Peterson-Burch B.D."/>
            <person name="Bricker B.J."/>
            <person name="Zuerner R.L."/>
            <person name="Qing Z."/>
            <person name="Li L.-L."/>
            <person name="Kapur V."/>
            <person name="Alt D.P."/>
            <person name="Olsen S.C."/>
        </authorList>
    </citation>
    <scope>NUCLEOTIDE SEQUENCE [LARGE SCALE GENOMIC DNA]</scope>
    <source>
        <strain>9-941</strain>
    </source>
</reference>
<comment type="function">
    <text evidence="1">The alpha subunit is responsible for the aldol cleavage of indoleglycerol phosphate to indole and glyceraldehyde 3-phosphate.</text>
</comment>
<comment type="catalytic activity">
    <reaction evidence="1">
        <text>(1S,2R)-1-C-(indol-3-yl)glycerol 3-phosphate + L-serine = D-glyceraldehyde 3-phosphate + L-tryptophan + H2O</text>
        <dbReference type="Rhea" id="RHEA:10532"/>
        <dbReference type="ChEBI" id="CHEBI:15377"/>
        <dbReference type="ChEBI" id="CHEBI:33384"/>
        <dbReference type="ChEBI" id="CHEBI:57912"/>
        <dbReference type="ChEBI" id="CHEBI:58866"/>
        <dbReference type="ChEBI" id="CHEBI:59776"/>
        <dbReference type="EC" id="4.2.1.20"/>
    </reaction>
</comment>
<comment type="pathway">
    <text evidence="1">Amino-acid biosynthesis; L-tryptophan biosynthesis; L-tryptophan from chorismate: step 5/5.</text>
</comment>
<comment type="subunit">
    <text evidence="1">Tetramer of two alpha and two beta chains.</text>
</comment>
<comment type="similarity">
    <text evidence="1">Belongs to the TrpA family.</text>
</comment>
<feature type="chain" id="PRO_0000098751" description="Tryptophan synthase alpha chain">
    <location>
        <begin position="1"/>
        <end position="279"/>
    </location>
</feature>
<feature type="active site" description="Proton acceptor" evidence="1">
    <location>
        <position position="50"/>
    </location>
</feature>
<feature type="active site" description="Proton acceptor" evidence="1">
    <location>
        <position position="61"/>
    </location>
</feature>
<gene>
    <name evidence="1" type="primary">trpA</name>
    <name type="ordered locus">BruAb1_2083</name>
</gene>
<accession>Q57AF2</accession>
<protein>
    <recommendedName>
        <fullName evidence="1">Tryptophan synthase alpha chain</fullName>
        <ecNumber evidence="1">4.2.1.20</ecNumber>
    </recommendedName>
</protein>
<evidence type="ECO:0000255" key="1">
    <source>
        <dbReference type="HAMAP-Rule" id="MF_00131"/>
    </source>
</evidence>
<keyword id="KW-0028">Amino-acid biosynthesis</keyword>
<keyword id="KW-0057">Aromatic amino acid biosynthesis</keyword>
<keyword id="KW-0456">Lyase</keyword>
<keyword id="KW-0822">Tryptophan biosynthesis</keyword>
<proteinExistence type="inferred from homology"/>
<sequence>MTTRIDTKFAELKAEGRPALVTYFMGGDPDLETALKVMKALPKAGADVIELGMPFSDPMADGPAIQAAGLRALNAGQTLAKTLYMAAEFRKEDDTTPIVMMGYYNPIYVYGVERFLTDAKASGVDGLIVVDLPSEMDAELCIPAMKAGINFIRLTTPTTDDKRLPKVLHNSSGFVYYVSMNGITGAAIADTAKVGEAVRHIKKSTDLPICVGFGVKTPEQAAAIATHADSVVVGTAIVNAIAGELDEKGKVKGDPVAAATRLVHALAESVRATRLEAAQ</sequence>
<dbReference type="EC" id="4.2.1.20" evidence="1"/>
<dbReference type="EMBL" id="AE017223">
    <property type="protein sequence ID" value="AAX75382.1"/>
    <property type="molecule type" value="Genomic_DNA"/>
</dbReference>
<dbReference type="RefSeq" id="WP_002965172.1">
    <property type="nucleotide sequence ID" value="NC_006932.1"/>
</dbReference>
<dbReference type="SMR" id="Q57AF2"/>
<dbReference type="EnsemblBacteria" id="AAX75382">
    <property type="protein sequence ID" value="AAX75382"/>
    <property type="gene ID" value="BruAb1_2083"/>
</dbReference>
<dbReference type="GeneID" id="93017585"/>
<dbReference type="KEGG" id="bmb:BruAb1_2083"/>
<dbReference type="HOGENOM" id="CLU_016734_0_0_5"/>
<dbReference type="UniPathway" id="UPA00035">
    <property type="reaction ID" value="UER00044"/>
</dbReference>
<dbReference type="Proteomes" id="UP000000540">
    <property type="component" value="Chromosome I"/>
</dbReference>
<dbReference type="GO" id="GO:0005829">
    <property type="term" value="C:cytosol"/>
    <property type="evidence" value="ECO:0007669"/>
    <property type="project" value="TreeGrafter"/>
</dbReference>
<dbReference type="GO" id="GO:0004834">
    <property type="term" value="F:tryptophan synthase activity"/>
    <property type="evidence" value="ECO:0007669"/>
    <property type="project" value="UniProtKB-UniRule"/>
</dbReference>
<dbReference type="CDD" id="cd04724">
    <property type="entry name" value="Tryptophan_synthase_alpha"/>
    <property type="match status" value="1"/>
</dbReference>
<dbReference type="FunFam" id="3.20.20.70:FF:000037">
    <property type="entry name" value="Tryptophan synthase alpha chain"/>
    <property type="match status" value="1"/>
</dbReference>
<dbReference type="Gene3D" id="3.20.20.70">
    <property type="entry name" value="Aldolase class I"/>
    <property type="match status" value="1"/>
</dbReference>
<dbReference type="HAMAP" id="MF_00131">
    <property type="entry name" value="Trp_synth_alpha"/>
    <property type="match status" value="1"/>
</dbReference>
<dbReference type="InterPro" id="IPR013785">
    <property type="entry name" value="Aldolase_TIM"/>
</dbReference>
<dbReference type="InterPro" id="IPR011060">
    <property type="entry name" value="RibuloseP-bd_barrel"/>
</dbReference>
<dbReference type="InterPro" id="IPR018204">
    <property type="entry name" value="Trp_synthase_alpha_AS"/>
</dbReference>
<dbReference type="InterPro" id="IPR002028">
    <property type="entry name" value="Trp_synthase_suA"/>
</dbReference>
<dbReference type="NCBIfam" id="TIGR00262">
    <property type="entry name" value="trpA"/>
    <property type="match status" value="1"/>
</dbReference>
<dbReference type="PANTHER" id="PTHR43406:SF1">
    <property type="entry name" value="TRYPTOPHAN SYNTHASE ALPHA CHAIN, CHLOROPLASTIC"/>
    <property type="match status" value="1"/>
</dbReference>
<dbReference type="PANTHER" id="PTHR43406">
    <property type="entry name" value="TRYPTOPHAN SYNTHASE, ALPHA CHAIN"/>
    <property type="match status" value="1"/>
</dbReference>
<dbReference type="Pfam" id="PF00290">
    <property type="entry name" value="Trp_syntA"/>
    <property type="match status" value="1"/>
</dbReference>
<dbReference type="SUPFAM" id="SSF51366">
    <property type="entry name" value="Ribulose-phoshate binding barrel"/>
    <property type="match status" value="1"/>
</dbReference>
<dbReference type="PROSITE" id="PS00167">
    <property type="entry name" value="TRP_SYNTHASE_ALPHA"/>
    <property type="match status" value="1"/>
</dbReference>